<feature type="chain" id="PRO_0000102221" description="Endonuclease III">
    <location>
        <begin position="1"/>
        <end position="212"/>
    </location>
</feature>
<feature type="domain" description="HhH" evidence="1">
    <location>
        <begin position="108"/>
        <end position="127"/>
    </location>
</feature>
<feature type="binding site" evidence="1">
    <location>
        <position position="187"/>
    </location>
    <ligand>
        <name>[4Fe-4S] cluster</name>
        <dbReference type="ChEBI" id="CHEBI:49883"/>
    </ligand>
</feature>
<feature type="binding site" evidence="1">
    <location>
        <position position="194"/>
    </location>
    <ligand>
        <name>[4Fe-4S] cluster</name>
        <dbReference type="ChEBI" id="CHEBI:49883"/>
    </ligand>
</feature>
<feature type="binding site" evidence="1">
    <location>
        <position position="197"/>
    </location>
    <ligand>
        <name>[4Fe-4S] cluster</name>
        <dbReference type="ChEBI" id="CHEBI:49883"/>
    </ligand>
</feature>
<feature type="binding site" evidence="1">
    <location>
        <position position="203"/>
    </location>
    <ligand>
        <name>[4Fe-4S] cluster</name>
        <dbReference type="ChEBI" id="CHEBI:49883"/>
    </ligand>
</feature>
<evidence type="ECO:0000255" key="1">
    <source>
        <dbReference type="HAMAP-Rule" id="MF_00942"/>
    </source>
</evidence>
<comment type="function">
    <text evidence="1">DNA repair enzyme that has both DNA N-glycosylase activity and AP-lyase activity. The DNA N-glycosylase activity releases various damaged pyrimidines from DNA by cleaving the N-glycosidic bond, leaving an AP (apurinic/apyrimidinic) site. The AP-lyase activity cleaves the phosphodiester bond 3' to the AP site by a beta-elimination, leaving a 3'-terminal unsaturated sugar and a product with a terminal 5'-phosphate.</text>
</comment>
<comment type="catalytic activity">
    <reaction evidence="1">
        <text>2'-deoxyribonucleotide-(2'-deoxyribose 5'-phosphate)-2'-deoxyribonucleotide-DNA = a 3'-end 2'-deoxyribonucleotide-(2,3-dehydro-2,3-deoxyribose 5'-phosphate)-DNA + a 5'-end 5'-phospho-2'-deoxyribonucleoside-DNA + H(+)</text>
        <dbReference type="Rhea" id="RHEA:66592"/>
        <dbReference type="Rhea" id="RHEA-COMP:13180"/>
        <dbReference type="Rhea" id="RHEA-COMP:16897"/>
        <dbReference type="Rhea" id="RHEA-COMP:17067"/>
        <dbReference type="ChEBI" id="CHEBI:15378"/>
        <dbReference type="ChEBI" id="CHEBI:136412"/>
        <dbReference type="ChEBI" id="CHEBI:157695"/>
        <dbReference type="ChEBI" id="CHEBI:167181"/>
        <dbReference type="EC" id="4.2.99.18"/>
    </reaction>
</comment>
<comment type="cofactor">
    <cofactor evidence="1">
        <name>[4Fe-4S] cluster</name>
        <dbReference type="ChEBI" id="CHEBI:49883"/>
    </cofactor>
    <text evidence="1">Binds 1 [4Fe-4S] cluster.</text>
</comment>
<comment type="similarity">
    <text evidence="1">Belongs to the Nth/MutY family.</text>
</comment>
<protein>
    <recommendedName>
        <fullName evidence="1">Endonuclease III</fullName>
        <ecNumber evidence="1">4.2.99.18</ecNumber>
    </recommendedName>
    <alternativeName>
        <fullName evidence="1">DNA-(apurinic or apyrimidinic site) lyase</fullName>
    </alternativeName>
</protein>
<keyword id="KW-0004">4Fe-4S</keyword>
<keyword id="KW-0227">DNA damage</keyword>
<keyword id="KW-0234">DNA repair</keyword>
<keyword id="KW-0238">DNA-binding</keyword>
<keyword id="KW-0326">Glycosidase</keyword>
<keyword id="KW-0378">Hydrolase</keyword>
<keyword id="KW-0408">Iron</keyword>
<keyword id="KW-0411">Iron-sulfur</keyword>
<keyword id="KW-0456">Lyase</keyword>
<keyword id="KW-0479">Metal-binding</keyword>
<keyword id="KW-1185">Reference proteome</keyword>
<proteinExistence type="inferred from homology"/>
<name>END3_RICPR</name>
<accession>O05956</accession>
<organism>
    <name type="scientific">Rickettsia prowazekii (strain Madrid E)</name>
    <dbReference type="NCBI Taxonomy" id="272947"/>
    <lineage>
        <taxon>Bacteria</taxon>
        <taxon>Pseudomonadati</taxon>
        <taxon>Pseudomonadota</taxon>
        <taxon>Alphaproteobacteria</taxon>
        <taxon>Rickettsiales</taxon>
        <taxon>Rickettsiaceae</taxon>
        <taxon>Rickettsieae</taxon>
        <taxon>Rickettsia</taxon>
        <taxon>typhus group</taxon>
    </lineage>
</organism>
<gene>
    <name evidence="1" type="primary">nth</name>
    <name type="ordered locus">RP746</name>
</gene>
<sequence length="212" mass="24174">MQAQIMNKIFEIFSKNNPKPQTELIYKNDFTLLVAVILSARATDISVNLATKHLFETYNTPEKFLELGEEGLKKYIKSIGLFNSKAKNIIALCQILIKNYQTSIPNNFKELVKLPGVGRKTANVVLNCLFAMPTMAVDTHVFRVSKRIGLAKGNTAAIVEKELLQIIDEKWLTYAHHWLILHGRYICKARKPGCNICPIKEYCEYYINTFSS</sequence>
<dbReference type="EC" id="4.2.99.18" evidence="1"/>
<dbReference type="EMBL" id="Y11778">
    <property type="protein sequence ID" value="CAA72458.1"/>
    <property type="molecule type" value="Genomic_DNA"/>
</dbReference>
<dbReference type="EMBL" id="AJ235273">
    <property type="protein sequence ID" value="CAA15174.1"/>
    <property type="molecule type" value="Genomic_DNA"/>
</dbReference>
<dbReference type="PIR" id="F71634">
    <property type="entry name" value="F71634"/>
</dbReference>
<dbReference type="RefSeq" id="NP_221098.1">
    <property type="nucleotide sequence ID" value="NC_000963.1"/>
</dbReference>
<dbReference type="RefSeq" id="WP_004597010.1">
    <property type="nucleotide sequence ID" value="NC_000963.1"/>
</dbReference>
<dbReference type="SMR" id="O05956"/>
<dbReference type="STRING" id="272947.gene:17555816"/>
<dbReference type="EnsemblBacteria" id="CAA15174">
    <property type="protein sequence ID" value="CAA15174"/>
    <property type="gene ID" value="CAA15174"/>
</dbReference>
<dbReference type="GeneID" id="57569867"/>
<dbReference type="KEGG" id="rpr:RP746"/>
<dbReference type="PATRIC" id="fig|272947.5.peg.779"/>
<dbReference type="eggNOG" id="COG0177">
    <property type="taxonomic scope" value="Bacteria"/>
</dbReference>
<dbReference type="HOGENOM" id="CLU_012862_3_3_5"/>
<dbReference type="OrthoDB" id="9800977at2"/>
<dbReference type="Proteomes" id="UP000002480">
    <property type="component" value="Chromosome"/>
</dbReference>
<dbReference type="GO" id="GO:0051539">
    <property type="term" value="F:4 iron, 4 sulfur cluster binding"/>
    <property type="evidence" value="ECO:0007669"/>
    <property type="project" value="UniProtKB-UniRule"/>
</dbReference>
<dbReference type="GO" id="GO:0140078">
    <property type="term" value="F:class I DNA-(apurinic or apyrimidinic site) endonuclease activity"/>
    <property type="evidence" value="ECO:0007669"/>
    <property type="project" value="UniProtKB-EC"/>
</dbReference>
<dbReference type="GO" id="GO:0003677">
    <property type="term" value="F:DNA binding"/>
    <property type="evidence" value="ECO:0007669"/>
    <property type="project" value="UniProtKB-UniRule"/>
</dbReference>
<dbReference type="GO" id="GO:0019104">
    <property type="term" value="F:DNA N-glycosylase activity"/>
    <property type="evidence" value="ECO:0007669"/>
    <property type="project" value="UniProtKB-UniRule"/>
</dbReference>
<dbReference type="GO" id="GO:0046872">
    <property type="term" value="F:metal ion binding"/>
    <property type="evidence" value="ECO:0007669"/>
    <property type="project" value="UniProtKB-KW"/>
</dbReference>
<dbReference type="GO" id="GO:0006285">
    <property type="term" value="P:base-excision repair, AP site formation"/>
    <property type="evidence" value="ECO:0007669"/>
    <property type="project" value="TreeGrafter"/>
</dbReference>
<dbReference type="CDD" id="cd00056">
    <property type="entry name" value="ENDO3c"/>
    <property type="match status" value="1"/>
</dbReference>
<dbReference type="FunFam" id="1.10.1670.10:FF:000001">
    <property type="entry name" value="Endonuclease III"/>
    <property type="match status" value="1"/>
</dbReference>
<dbReference type="FunFam" id="1.10.340.30:FF:000001">
    <property type="entry name" value="Endonuclease III"/>
    <property type="match status" value="1"/>
</dbReference>
<dbReference type="Gene3D" id="1.10.1670.10">
    <property type="entry name" value="Helix-hairpin-Helix base-excision DNA repair enzymes (C-terminal)"/>
    <property type="match status" value="1"/>
</dbReference>
<dbReference type="Gene3D" id="1.10.340.30">
    <property type="entry name" value="Hypothetical protein, domain 2"/>
    <property type="match status" value="1"/>
</dbReference>
<dbReference type="HAMAP" id="MF_00942">
    <property type="entry name" value="Nth"/>
    <property type="match status" value="1"/>
</dbReference>
<dbReference type="InterPro" id="IPR011257">
    <property type="entry name" value="DNA_glycosylase"/>
</dbReference>
<dbReference type="InterPro" id="IPR004036">
    <property type="entry name" value="Endonuclease-III-like_CS2"/>
</dbReference>
<dbReference type="InterPro" id="IPR003651">
    <property type="entry name" value="Endonuclease3_FeS-loop_motif"/>
</dbReference>
<dbReference type="InterPro" id="IPR004035">
    <property type="entry name" value="Endouclease-III_FeS-bd_BS"/>
</dbReference>
<dbReference type="InterPro" id="IPR003265">
    <property type="entry name" value="HhH-GPD_domain"/>
</dbReference>
<dbReference type="InterPro" id="IPR023170">
    <property type="entry name" value="HhH_base_excis_C"/>
</dbReference>
<dbReference type="InterPro" id="IPR000445">
    <property type="entry name" value="HhH_motif"/>
</dbReference>
<dbReference type="InterPro" id="IPR005759">
    <property type="entry name" value="Nth"/>
</dbReference>
<dbReference type="NCBIfam" id="TIGR01083">
    <property type="entry name" value="nth"/>
    <property type="match status" value="1"/>
</dbReference>
<dbReference type="PANTHER" id="PTHR10359">
    <property type="entry name" value="A/G-SPECIFIC ADENINE GLYCOSYLASE/ENDONUCLEASE III"/>
    <property type="match status" value="1"/>
</dbReference>
<dbReference type="PANTHER" id="PTHR10359:SF18">
    <property type="entry name" value="ENDONUCLEASE III"/>
    <property type="match status" value="1"/>
</dbReference>
<dbReference type="Pfam" id="PF10576">
    <property type="entry name" value="EndIII_4Fe-2S"/>
    <property type="match status" value="1"/>
</dbReference>
<dbReference type="Pfam" id="PF00633">
    <property type="entry name" value="HHH"/>
    <property type="match status" value="1"/>
</dbReference>
<dbReference type="Pfam" id="PF00730">
    <property type="entry name" value="HhH-GPD"/>
    <property type="match status" value="1"/>
</dbReference>
<dbReference type="PIRSF" id="PIRSF001435">
    <property type="entry name" value="Nth"/>
    <property type="match status" value="1"/>
</dbReference>
<dbReference type="SMART" id="SM00478">
    <property type="entry name" value="ENDO3c"/>
    <property type="match status" value="1"/>
</dbReference>
<dbReference type="SMART" id="SM00525">
    <property type="entry name" value="FES"/>
    <property type="match status" value="1"/>
</dbReference>
<dbReference type="SUPFAM" id="SSF48150">
    <property type="entry name" value="DNA-glycosylase"/>
    <property type="match status" value="1"/>
</dbReference>
<dbReference type="PROSITE" id="PS00764">
    <property type="entry name" value="ENDONUCLEASE_III_1"/>
    <property type="match status" value="1"/>
</dbReference>
<dbReference type="PROSITE" id="PS01155">
    <property type="entry name" value="ENDONUCLEASE_III_2"/>
    <property type="match status" value="1"/>
</dbReference>
<reference key="1">
    <citation type="journal article" date="1997" name="Microbiology">
        <title>Genomic rearrangements during evolution of the obligate intracellular parasite Rickettsia prowazekii as inferred from an analysis of 52015 bp nucleotide sequence.</title>
        <authorList>
            <person name="Andersson J.O."/>
            <person name="Andersson S.G.E."/>
        </authorList>
    </citation>
    <scope>NUCLEOTIDE SEQUENCE [GENOMIC DNA]</scope>
    <source>
        <strain>Madrid E</strain>
    </source>
</reference>
<reference key="2">
    <citation type="journal article" date="1998" name="Nature">
        <title>The genome sequence of Rickettsia prowazekii and the origin of mitochondria.</title>
        <authorList>
            <person name="Andersson S.G.E."/>
            <person name="Zomorodipour A."/>
            <person name="Andersson J.O."/>
            <person name="Sicheritz-Ponten T."/>
            <person name="Alsmark U.C.M."/>
            <person name="Podowski R.M."/>
            <person name="Naeslund A.K."/>
            <person name="Eriksson A.-S."/>
            <person name="Winkler H.H."/>
            <person name="Kurland C.G."/>
        </authorList>
    </citation>
    <scope>NUCLEOTIDE SEQUENCE [LARGE SCALE GENOMIC DNA]</scope>
    <source>
        <strain>Madrid E</strain>
    </source>
</reference>